<name>ATP25_PARBP</name>
<proteinExistence type="inferred from homology"/>
<gene>
    <name type="primary">ATP25</name>
    <name type="ORF">PABG_02606</name>
</gene>
<keyword id="KW-0472">Membrane</keyword>
<keyword id="KW-0496">Mitochondrion</keyword>
<keyword id="KW-0999">Mitochondrion inner membrane</keyword>
<keyword id="KW-0809">Transit peptide</keyword>
<organism>
    <name type="scientific">Paracoccidioides brasiliensis (strain Pb03)</name>
    <dbReference type="NCBI Taxonomy" id="482561"/>
    <lineage>
        <taxon>Eukaryota</taxon>
        <taxon>Fungi</taxon>
        <taxon>Dikarya</taxon>
        <taxon>Ascomycota</taxon>
        <taxon>Pezizomycotina</taxon>
        <taxon>Eurotiomycetes</taxon>
        <taxon>Eurotiomycetidae</taxon>
        <taxon>Onygenales</taxon>
        <taxon>Ajellomycetaceae</taxon>
        <taxon>Paracoccidioides</taxon>
    </lineage>
</organism>
<sequence>MSRILLRGIQCHACRQNVIRSFVSASGVTITPPAIGSVSPSKAHPPHLSGSFPTRHVKLFSSQAKDDPSLAADAVSENSAAQEGSYPQENSEQHVPWYLQEEVQEMALHPMRQQQELPPLPENPPPILKVLLEYISFDIGLDNLNLLDLRTLDPPPALGANLIMIFGTARSVKHLNVSADKFCRWLRTTYKLRPDADGLLGRNELKIKLRRKARRARLVKRAGSTLKQPDDGITTGWICVDVGIVEGGQLSKPEGVQKAGFVGFGTVIQGTRIVVQMMTEEKREEIDLESLWRQTLEKNSMDNPGLPKPQAEEPPQVVGFTHESSTVTAADFSHRVSQTPPIRANYEQLRSISTSLHRLRDKRGSATDFVPTDTTVATKSAKSISSQESLPSLFNYLSNLEPDKAIDELGQGMDDRTSTSFLQRFYEELARTAPQIASAQKLELMCTGILLQHSGYRKEDLFQAFKEHIVSNYPLPRALVLRLLDALLAFKPDPNSNPPRLRLPGADMELALRLIENAALRGTNILHADFLIRVFLAVSYRTRVYAVKPENLHSAAITGNRIPVSIDEFESVQRIQTRLASIIRAAKVALGEKEYLDILRVHSDQGEYAKFWNAWGEVALAGIHRGKSFYLFLFNLHAELGDWQQSRTTLLNCIPMMWREDPPVFFDAELAEVVSKCIALAYPDIDDTVQHNLPALIVKTWHHCRTAIQNQKMNERKERLIQTELGTLPEN</sequence>
<protein>
    <recommendedName>
        <fullName>ATPase synthesis protein 25, mitochondrial</fullName>
    </recommendedName>
</protein>
<accession>C0S4K1</accession>
<evidence type="ECO:0000250" key="1"/>
<evidence type="ECO:0000255" key="2"/>
<evidence type="ECO:0000256" key="3">
    <source>
        <dbReference type="SAM" id="MobiDB-lite"/>
    </source>
</evidence>
<evidence type="ECO:0000305" key="4"/>
<reference key="1">
    <citation type="journal article" date="2011" name="PLoS Genet.">
        <title>Comparative genomic analysis of human fungal pathogens causing paracoccidioidomycosis.</title>
        <authorList>
            <person name="Desjardins C.A."/>
            <person name="Champion M.D."/>
            <person name="Holder J.W."/>
            <person name="Muszewska A."/>
            <person name="Goldberg J."/>
            <person name="Bailao A.M."/>
            <person name="Brigido M.M."/>
            <person name="Ferreira M.E."/>
            <person name="Garcia A.M."/>
            <person name="Grynberg M."/>
            <person name="Gujja S."/>
            <person name="Heiman D.I."/>
            <person name="Henn M.R."/>
            <person name="Kodira C.D."/>
            <person name="Leon-Narvaez H."/>
            <person name="Longo L.V.G."/>
            <person name="Ma L.-J."/>
            <person name="Malavazi I."/>
            <person name="Matsuo A.L."/>
            <person name="Morais F.V."/>
            <person name="Pereira M."/>
            <person name="Rodriguez-Brito S."/>
            <person name="Sakthikumar S."/>
            <person name="Salem-Izacc S.M."/>
            <person name="Sykes S.M."/>
            <person name="Teixeira M.M."/>
            <person name="Vallejo M.C."/>
            <person name="Walter M.E."/>
            <person name="Yandava C."/>
            <person name="Young S."/>
            <person name="Zeng Q."/>
            <person name="Zucker J."/>
            <person name="Felipe M.S."/>
            <person name="Goldman G.H."/>
            <person name="Haas B.J."/>
            <person name="McEwen J.G."/>
            <person name="Nino-Vega G."/>
            <person name="Puccia R."/>
            <person name="San-Blas G."/>
            <person name="Soares C.M."/>
            <person name="Birren B.W."/>
            <person name="Cuomo C.A."/>
        </authorList>
    </citation>
    <scope>NUCLEOTIDE SEQUENCE [LARGE SCALE GENOMIC DNA]</scope>
    <source>
        <strain>Pb03</strain>
    </source>
</reference>
<feature type="transit peptide" description="Mitochondrion" evidence="2">
    <location>
        <begin position="1"/>
        <end position="29"/>
    </location>
</feature>
<feature type="chain" id="PRO_0000404480" description="ATPase synthesis protein 25, mitochondrial">
    <location>
        <begin position="30"/>
        <end position="731"/>
    </location>
</feature>
<feature type="region of interest" description="Disordered" evidence="3">
    <location>
        <begin position="68"/>
        <end position="93"/>
    </location>
</feature>
<feature type="compositionally biased region" description="Polar residues" evidence="3">
    <location>
        <begin position="76"/>
        <end position="90"/>
    </location>
</feature>
<dbReference type="EMBL" id="KN305533">
    <property type="protein sequence ID" value="EEH20347.2"/>
    <property type="molecule type" value="Genomic_DNA"/>
</dbReference>
<dbReference type="SMR" id="C0S4K1"/>
<dbReference type="VEuPathDB" id="FungiDB:PABG_02606"/>
<dbReference type="HOGENOM" id="CLU_016140_0_0_1"/>
<dbReference type="OrthoDB" id="29144at33183"/>
<dbReference type="GO" id="GO:0005743">
    <property type="term" value="C:mitochondrial inner membrane"/>
    <property type="evidence" value="ECO:0007669"/>
    <property type="project" value="UniProtKB-SubCell"/>
</dbReference>
<dbReference type="GO" id="GO:0140053">
    <property type="term" value="P:mitochondrial gene expression"/>
    <property type="evidence" value="ECO:0007669"/>
    <property type="project" value="InterPro"/>
</dbReference>
<dbReference type="GO" id="GO:0048255">
    <property type="term" value="P:mRNA stabilization"/>
    <property type="evidence" value="ECO:0007669"/>
    <property type="project" value="TreeGrafter"/>
</dbReference>
<dbReference type="FunFam" id="3.30.460.10:FF:000044">
    <property type="entry name" value="ATPase synthesis protein 25, mitochondrial"/>
    <property type="match status" value="1"/>
</dbReference>
<dbReference type="Gene3D" id="3.30.460.10">
    <property type="entry name" value="Beta Polymerase, domain 2"/>
    <property type="match status" value="1"/>
</dbReference>
<dbReference type="InterPro" id="IPR040152">
    <property type="entry name" value="Atp25"/>
</dbReference>
<dbReference type="InterPro" id="IPR043519">
    <property type="entry name" value="NT_sf"/>
</dbReference>
<dbReference type="PANTHER" id="PTHR28087">
    <property type="entry name" value="ATPASE SYNTHESIS PROTEIN 25, MITOCHONDRIAL"/>
    <property type="match status" value="1"/>
</dbReference>
<dbReference type="PANTHER" id="PTHR28087:SF1">
    <property type="entry name" value="ATPASE SYNTHESIS PROTEIN 25, MITOCHONDRIAL"/>
    <property type="match status" value="1"/>
</dbReference>
<comment type="function">
    <text evidence="1">Probable mitochondrial mRNA stabilization factor.</text>
</comment>
<comment type="subcellular location">
    <subcellularLocation>
        <location evidence="1">Mitochondrion inner membrane</location>
        <topology evidence="1">Peripheral membrane protein</topology>
        <orientation evidence="1">Matrix side</orientation>
    </subcellularLocation>
</comment>
<comment type="similarity">
    <text evidence="4">Belongs to the ATP25 family.</text>
</comment>